<keyword id="KW-1185">Reference proteome</keyword>
<name>Y7209_DICDI</name>
<gene>
    <name type="ORF">DDB_G0275531</name>
</gene>
<organism>
    <name type="scientific">Dictyostelium discoideum</name>
    <name type="common">Social amoeba</name>
    <dbReference type="NCBI Taxonomy" id="44689"/>
    <lineage>
        <taxon>Eukaryota</taxon>
        <taxon>Amoebozoa</taxon>
        <taxon>Evosea</taxon>
        <taxon>Eumycetozoa</taxon>
        <taxon>Dictyostelia</taxon>
        <taxon>Dictyosteliales</taxon>
        <taxon>Dictyosteliaceae</taxon>
        <taxon>Dictyostelium</taxon>
    </lineage>
</organism>
<feature type="chain" id="PRO_0000348120" description="Putative uncharacterized protein DDB_G0275531">
    <location>
        <begin position="1"/>
        <end position="68"/>
    </location>
</feature>
<sequence>MWFQDVRTLKEGLEFNGITLHLTSCQHGCILSRKELNDYVKKINIQMLKSHWMEKQSNYKYLFFNYIK</sequence>
<reference key="1">
    <citation type="journal article" date="2002" name="Nature">
        <title>Sequence and analysis of chromosome 2 of Dictyostelium discoideum.</title>
        <authorList>
            <person name="Gloeckner G."/>
            <person name="Eichinger L."/>
            <person name="Szafranski K."/>
            <person name="Pachebat J.A."/>
            <person name="Bankier A.T."/>
            <person name="Dear P.H."/>
            <person name="Lehmann R."/>
            <person name="Baumgart C."/>
            <person name="Parra G."/>
            <person name="Abril J.F."/>
            <person name="Guigo R."/>
            <person name="Kumpf K."/>
            <person name="Tunggal B."/>
            <person name="Cox E.C."/>
            <person name="Quail M.A."/>
            <person name="Platzer M."/>
            <person name="Rosenthal A."/>
            <person name="Noegel A.A."/>
        </authorList>
    </citation>
    <scope>NUCLEOTIDE SEQUENCE [LARGE SCALE GENOMIC DNA]</scope>
    <source>
        <strain>AX4</strain>
    </source>
</reference>
<reference key="2">
    <citation type="journal article" date="2005" name="Nature">
        <title>The genome of the social amoeba Dictyostelium discoideum.</title>
        <authorList>
            <person name="Eichinger L."/>
            <person name="Pachebat J.A."/>
            <person name="Gloeckner G."/>
            <person name="Rajandream M.A."/>
            <person name="Sucgang R."/>
            <person name="Berriman M."/>
            <person name="Song J."/>
            <person name="Olsen R."/>
            <person name="Szafranski K."/>
            <person name="Xu Q."/>
            <person name="Tunggal B."/>
            <person name="Kummerfeld S."/>
            <person name="Madera M."/>
            <person name="Konfortov B.A."/>
            <person name="Rivero F."/>
            <person name="Bankier A.T."/>
            <person name="Lehmann R."/>
            <person name="Hamlin N."/>
            <person name="Davies R."/>
            <person name="Gaudet P."/>
            <person name="Fey P."/>
            <person name="Pilcher K."/>
            <person name="Chen G."/>
            <person name="Saunders D."/>
            <person name="Sodergren E.J."/>
            <person name="Davis P."/>
            <person name="Kerhornou A."/>
            <person name="Nie X."/>
            <person name="Hall N."/>
            <person name="Anjard C."/>
            <person name="Hemphill L."/>
            <person name="Bason N."/>
            <person name="Farbrother P."/>
            <person name="Desany B."/>
            <person name="Just E."/>
            <person name="Morio T."/>
            <person name="Rost R."/>
            <person name="Churcher C.M."/>
            <person name="Cooper J."/>
            <person name="Haydock S."/>
            <person name="van Driessche N."/>
            <person name="Cronin A."/>
            <person name="Goodhead I."/>
            <person name="Muzny D.M."/>
            <person name="Mourier T."/>
            <person name="Pain A."/>
            <person name="Lu M."/>
            <person name="Harper D."/>
            <person name="Lindsay R."/>
            <person name="Hauser H."/>
            <person name="James K.D."/>
            <person name="Quiles M."/>
            <person name="Madan Babu M."/>
            <person name="Saito T."/>
            <person name="Buchrieser C."/>
            <person name="Wardroper A."/>
            <person name="Felder M."/>
            <person name="Thangavelu M."/>
            <person name="Johnson D."/>
            <person name="Knights A."/>
            <person name="Loulseged H."/>
            <person name="Mungall K.L."/>
            <person name="Oliver K."/>
            <person name="Price C."/>
            <person name="Quail M.A."/>
            <person name="Urushihara H."/>
            <person name="Hernandez J."/>
            <person name="Rabbinowitsch E."/>
            <person name="Steffen D."/>
            <person name="Sanders M."/>
            <person name="Ma J."/>
            <person name="Kohara Y."/>
            <person name="Sharp S."/>
            <person name="Simmonds M.N."/>
            <person name="Spiegler S."/>
            <person name="Tivey A."/>
            <person name="Sugano S."/>
            <person name="White B."/>
            <person name="Walker D."/>
            <person name="Woodward J.R."/>
            <person name="Winckler T."/>
            <person name="Tanaka Y."/>
            <person name="Shaulsky G."/>
            <person name="Schleicher M."/>
            <person name="Weinstock G.M."/>
            <person name="Rosenthal A."/>
            <person name="Cox E.C."/>
            <person name="Chisholm R.L."/>
            <person name="Gibbs R.A."/>
            <person name="Loomis W.F."/>
            <person name="Platzer M."/>
            <person name="Kay R.R."/>
            <person name="Williams J.G."/>
            <person name="Dear P.H."/>
            <person name="Noegel A.A."/>
            <person name="Barrell B.G."/>
            <person name="Kuspa A."/>
        </authorList>
    </citation>
    <scope>NUCLEOTIDE SEQUENCE [LARGE SCALE GENOMIC DNA]</scope>
    <source>
        <strain>AX4</strain>
    </source>
</reference>
<protein>
    <recommendedName>
        <fullName>Putative uncharacterized protein DDB_G0275531</fullName>
    </recommendedName>
</protein>
<proteinExistence type="predicted"/>
<accession>Q86H59</accession>
<accession>Q552X4</accession>
<dbReference type="EMBL" id="AAFI02000013">
    <property type="protein sequence ID" value="EAL69516.1"/>
    <property type="molecule type" value="Genomic_DNA"/>
</dbReference>
<dbReference type="RefSeq" id="XP_643554.1">
    <property type="nucleotide sequence ID" value="XM_638462.1"/>
</dbReference>
<dbReference type="PaxDb" id="44689-DDB0167209"/>
<dbReference type="EnsemblProtists" id="EAL69516">
    <property type="protein sequence ID" value="EAL69516"/>
    <property type="gene ID" value="DDB_G0275531"/>
</dbReference>
<dbReference type="GeneID" id="8620137"/>
<dbReference type="KEGG" id="ddi:DDB_G0275531"/>
<dbReference type="dictyBase" id="DDB_G0275531"/>
<dbReference type="VEuPathDB" id="AmoebaDB:DDB_G0275531"/>
<dbReference type="HOGENOM" id="CLU_2799316_0_0_1"/>
<dbReference type="InParanoid" id="Q86H59"/>
<dbReference type="PRO" id="PR:Q86H59"/>
<dbReference type="Proteomes" id="UP000002195">
    <property type="component" value="Chromosome 2"/>
</dbReference>